<dbReference type="EMBL" id="AC133585">
    <property type="status" value="NOT_ANNOTATED_CDS"/>
    <property type="molecule type" value="Genomic_DNA"/>
</dbReference>
<dbReference type="EMBL" id="AC154206">
    <property type="status" value="NOT_ANNOTATED_CDS"/>
    <property type="molecule type" value="Genomic_DNA"/>
</dbReference>
<dbReference type="EMBL" id="AC154239">
    <property type="status" value="NOT_ANNOTATED_CDS"/>
    <property type="molecule type" value="Genomic_DNA"/>
</dbReference>
<dbReference type="EMBL" id="AC165262">
    <property type="status" value="NOT_ANNOTATED_CDS"/>
    <property type="molecule type" value="Genomic_DNA"/>
</dbReference>
<dbReference type="RefSeq" id="XP_006519340.1">
    <property type="nucleotide sequence ID" value="XM_006519277.5"/>
</dbReference>
<dbReference type="RefSeq" id="XP_006519341.1">
    <property type="nucleotide sequence ID" value="XM_006519278.5"/>
</dbReference>
<dbReference type="RefSeq" id="XP_006519342.1">
    <property type="nucleotide sequence ID" value="XM_006519279.5"/>
</dbReference>
<dbReference type="RefSeq" id="XP_011243420.1">
    <property type="nucleotide sequence ID" value="XM_011245118.4"/>
</dbReference>
<dbReference type="RefSeq" id="XP_036014654.1">
    <property type="nucleotide sequence ID" value="XM_036158761.1"/>
</dbReference>
<dbReference type="SMR" id="E9Q2M9"/>
<dbReference type="FunCoup" id="E9Q2M9">
    <property type="interactions" value="201"/>
</dbReference>
<dbReference type="IntAct" id="E9Q2M9">
    <property type="interactions" value="1"/>
</dbReference>
<dbReference type="MINT" id="E9Q2M9"/>
<dbReference type="STRING" id="10090.ENSMUSP00000057556"/>
<dbReference type="iPTMnet" id="E9Q2M9"/>
<dbReference type="PhosphoSitePlus" id="E9Q2M9"/>
<dbReference type="PaxDb" id="10090-ENSMUSP00000117068"/>
<dbReference type="PeptideAtlas" id="E9Q2M9"/>
<dbReference type="ProteomicsDB" id="312223"/>
<dbReference type="Antibodypedia" id="44930">
    <property type="antibodies" value="66 antibodies from 17 providers"/>
</dbReference>
<dbReference type="Ensembl" id="ENSMUST00000130509.10">
    <property type="protein sequence ID" value="ENSMUSP00000117068.4"/>
    <property type="gene ID" value="ENSMUSG00000051506.18"/>
</dbReference>
<dbReference type="GeneID" id="545030"/>
<dbReference type="AGR" id="MGI:3584510"/>
<dbReference type="CTD" id="57705"/>
<dbReference type="MGI" id="MGI:3584510">
    <property type="gene designation" value="Wdfy4"/>
</dbReference>
<dbReference type="VEuPathDB" id="HostDB:ENSMUSG00000051506"/>
<dbReference type="eggNOG" id="KOG1786">
    <property type="taxonomic scope" value="Eukaryota"/>
</dbReference>
<dbReference type="eggNOG" id="KOG1788">
    <property type="taxonomic scope" value="Eukaryota"/>
</dbReference>
<dbReference type="GeneTree" id="ENSGT00940000155684"/>
<dbReference type="HOGENOM" id="CLU_000175_5_0_1"/>
<dbReference type="InParanoid" id="E9Q2M9"/>
<dbReference type="OMA" id="PREGARN"/>
<dbReference type="OrthoDB" id="10018316at2759"/>
<dbReference type="PhylomeDB" id="E9Q2M9"/>
<dbReference type="TreeFam" id="TF313658"/>
<dbReference type="ChiTaRS" id="Wdfy4">
    <property type="organism name" value="mouse"/>
</dbReference>
<dbReference type="PRO" id="PR:E9Q2M9"/>
<dbReference type="Proteomes" id="UP000000589">
    <property type="component" value="Chromosome 14"/>
</dbReference>
<dbReference type="RNAct" id="E9Q2M9">
    <property type="molecule type" value="protein"/>
</dbReference>
<dbReference type="Bgee" id="ENSMUSG00000051506">
    <property type="expression patterns" value="Expressed in mesenteric lymph node and 84 other cell types or tissues"/>
</dbReference>
<dbReference type="ExpressionAtlas" id="E9Q2M9">
    <property type="expression patterns" value="baseline and differential"/>
</dbReference>
<dbReference type="GO" id="GO:0005769">
    <property type="term" value="C:early endosome"/>
    <property type="evidence" value="ECO:0007669"/>
    <property type="project" value="UniProtKB-SubCell"/>
</dbReference>
<dbReference type="GO" id="GO:0005783">
    <property type="term" value="C:endoplasmic reticulum"/>
    <property type="evidence" value="ECO:0007669"/>
    <property type="project" value="UniProtKB-SubCell"/>
</dbReference>
<dbReference type="GO" id="GO:0019882">
    <property type="term" value="P:antigen processing and presentation"/>
    <property type="evidence" value="ECO:0000315"/>
    <property type="project" value="MGI"/>
</dbReference>
<dbReference type="GO" id="GO:0006914">
    <property type="term" value="P:autophagy"/>
    <property type="evidence" value="ECO:0007669"/>
    <property type="project" value="UniProtKB-KW"/>
</dbReference>
<dbReference type="GO" id="GO:0036037">
    <property type="term" value="P:CD8-positive, alpha-beta T cell activation"/>
    <property type="evidence" value="ECO:0000315"/>
    <property type="project" value="MGI"/>
</dbReference>
<dbReference type="GO" id="GO:0098586">
    <property type="term" value="P:cellular response to virus"/>
    <property type="evidence" value="ECO:0000315"/>
    <property type="project" value="MGI"/>
</dbReference>
<dbReference type="CDD" id="cd06071">
    <property type="entry name" value="Beach"/>
    <property type="match status" value="1"/>
</dbReference>
<dbReference type="CDD" id="cd01201">
    <property type="entry name" value="PH_BEACH"/>
    <property type="match status" value="1"/>
</dbReference>
<dbReference type="FunFam" id="1.10.1540.10:FF:000002">
    <property type="entry name" value="WD repeat and FYVE domain containing 3"/>
    <property type="match status" value="1"/>
</dbReference>
<dbReference type="Gene3D" id="1.10.1540.10">
    <property type="entry name" value="BEACH domain"/>
    <property type="match status" value="1"/>
</dbReference>
<dbReference type="Gene3D" id="2.30.29.30">
    <property type="entry name" value="Pleckstrin-homology domain (PH domain)/Phosphotyrosine-binding domain (PTB)"/>
    <property type="match status" value="1"/>
</dbReference>
<dbReference type="Gene3D" id="2.130.10.10">
    <property type="entry name" value="YVTN repeat-like/Quinoprotein amine dehydrogenase"/>
    <property type="match status" value="1"/>
</dbReference>
<dbReference type="InterPro" id="IPR016024">
    <property type="entry name" value="ARM-type_fold"/>
</dbReference>
<dbReference type="InterPro" id="IPR000409">
    <property type="entry name" value="BEACH_dom"/>
</dbReference>
<dbReference type="InterPro" id="IPR036372">
    <property type="entry name" value="BEACH_dom_sf"/>
</dbReference>
<dbReference type="InterPro" id="IPR051944">
    <property type="entry name" value="BEACH_domain_protein"/>
</dbReference>
<dbReference type="InterPro" id="IPR023362">
    <property type="entry name" value="PH-BEACH_dom"/>
</dbReference>
<dbReference type="InterPro" id="IPR011993">
    <property type="entry name" value="PH-like_dom_sf"/>
</dbReference>
<dbReference type="InterPro" id="IPR015943">
    <property type="entry name" value="WD40/YVTN_repeat-like_dom_sf"/>
</dbReference>
<dbReference type="InterPro" id="IPR019775">
    <property type="entry name" value="WD40_repeat_CS"/>
</dbReference>
<dbReference type="InterPro" id="IPR036322">
    <property type="entry name" value="WD40_repeat_dom_sf"/>
</dbReference>
<dbReference type="InterPro" id="IPR001680">
    <property type="entry name" value="WD40_rpt"/>
</dbReference>
<dbReference type="PANTHER" id="PTHR46108">
    <property type="entry name" value="BLUE CHEESE"/>
    <property type="match status" value="1"/>
</dbReference>
<dbReference type="PANTHER" id="PTHR46108:SF3">
    <property type="entry name" value="WD REPEAT- AND FYVE DOMAIN-CONTAINING PROTEIN 4"/>
    <property type="match status" value="1"/>
</dbReference>
<dbReference type="Pfam" id="PF02138">
    <property type="entry name" value="Beach"/>
    <property type="match status" value="1"/>
</dbReference>
<dbReference type="Pfam" id="PF14844">
    <property type="entry name" value="PH_BEACH"/>
    <property type="match status" value="1"/>
</dbReference>
<dbReference type="Pfam" id="PF00400">
    <property type="entry name" value="WD40"/>
    <property type="match status" value="2"/>
</dbReference>
<dbReference type="SMART" id="SM01026">
    <property type="entry name" value="Beach"/>
    <property type="match status" value="1"/>
</dbReference>
<dbReference type="SMART" id="SM00320">
    <property type="entry name" value="WD40"/>
    <property type="match status" value="5"/>
</dbReference>
<dbReference type="SUPFAM" id="SSF48371">
    <property type="entry name" value="ARM repeat"/>
    <property type="match status" value="2"/>
</dbReference>
<dbReference type="SUPFAM" id="SSF81837">
    <property type="entry name" value="BEACH domain"/>
    <property type="match status" value="1"/>
</dbReference>
<dbReference type="SUPFAM" id="SSF50729">
    <property type="entry name" value="PH domain-like"/>
    <property type="match status" value="1"/>
</dbReference>
<dbReference type="SUPFAM" id="SSF50978">
    <property type="entry name" value="WD40 repeat-like"/>
    <property type="match status" value="1"/>
</dbReference>
<dbReference type="PROSITE" id="PS50197">
    <property type="entry name" value="BEACH"/>
    <property type="match status" value="1"/>
</dbReference>
<dbReference type="PROSITE" id="PS51783">
    <property type="entry name" value="PH_BEACH"/>
    <property type="match status" value="1"/>
</dbReference>
<dbReference type="PROSITE" id="PS00678">
    <property type="entry name" value="WD_REPEATS_1"/>
    <property type="match status" value="1"/>
</dbReference>
<dbReference type="PROSITE" id="PS50082">
    <property type="entry name" value="WD_REPEATS_2"/>
    <property type="match status" value="1"/>
</dbReference>
<dbReference type="PROSITE" id="PS50294">
    <property type="entry name" value="WD_REPEATS_REGION"/>
    <property type="match status" value="1"/>
</dbReference>
<comment type="function">
    <text evidence="5 6">Plays a critical role in the regulation of cDC1-mediated cross-presentation of viral and tumor antigens in dendritic cells (PubMed:30409884). Mechanistically, acts near the plasma membrane and interacts with endosomal membranes to promote endosomal-to-cytosol antigen trafficking (PubMed:30409884). Also plays a role in B-cell survival through regulation of autophagy (PubMed:30257884).</text>
</comment>
<comment type="subunit">
    <text evidence="6">Interacts with HSP90AB1.</text>
</comment>
<comment type="subcellular location">
    <subcellularLocation>
        <location evidence="6">Early endosome</location>
    </subcellularLocation>
    <subcellularLocation>
        <location evidence="6">Endoplasmic reticulum</location>
    </subcellularLocation>
</comment>
<comment type="tissue specificity">
    <text evidence="5">Highly expressed in immune tissues, especially B lymphocytes.</text>
</comment>
<comment type="disruption phenotype">
    <text evidence="5 6">Mice are unable to cross-present in vivo (PubMed:30409884). In addition, affects the development of B-cells with a block in the transition between the pro- and pre-B cell stages in bone marrow (PubMed:30257884).</text>
</comment>
<proteinExistence type="evidence at protein level"/>
<evidence type="ECO:0000255" key="1"/>
<evidence type="ECO:0000255" key="2">
    <source>
        <dbReference type="PROSITE-ProRule" id="PRU00026"/>
    </source>
</evidence>
<evidence type="ECO:0000255" key="3">
    <source>
        <dbReference type="PROSITE-ProRule" id="PRU01119"/>
    </source>
</evidence>
<evidence type="ECO:0000256" key="4">
    <source>
        <dbReference type="SAM" id="MobiDB-lite"/>
    </source>
</evidence>
<evidence type="ECO:0000269" key="5">
    <source>
    </source>
</evidence>
<evidence type="ECO:0000269" key="6">
    <source>
    </source>
</evidence>
<evidence type="ECO:0000303" key="7">
    <source>
    </source>
</evidence>
<evidence type="ECO:0007744" key="8">
    <source>
    </source>
</evidence>
<name>WDFY4_MOUSE</name>
<organism>
    <name type="scientific">Mus musculus</name>
    <name type="common">Mouse</name>
    <dbReference type="NCBI Taxonomy" id="10090"/>
    <lineage>
        <taxon>Eukaryota</taxon>
        <taxon>Metazoa</taxon>
        <taxon>Chordata</taxon>
        <taxon>Craniata</taxon>
        <taxon>Vertebrata</taxon>
        <taxon>Euteleostomi</taxon>
        <taxon>Mammalia</taxon>
        <taxon>Eutheria</taxon>
        <taxon>Euarchontoglires</taxon>
        <taxon>Glires</taxon>
        <taxon>Rodentia</taxon>
        <taxon>Myomorpha</taxon>
        <taxon>Muroidea</taxon>
        <taxon>Muridae</taxon>
        <taxon>Murinae</taxon>
        <taxon>Mus</taxon>
        <taxon>Mus</taxon>
    </lineage>
</organism>
<protein>
    <recommendedName>
        <fullName evidence="7">WD repeat- and FYVE domain-containing protein 4</fullName>
    </recommendedName>
</protein>
<gene>
    <name evidence="7" type="primary">Wdfy4</name>
</gene>
<keyword id="KW-0072">Autophagy</keyword>
<keyword id="KW-0256">Endoplasmic reticulum</keyword>
<keyword id="KW-0967">Endosome</keyword>
<keyword id="KW-1185">Reference proteome</keyword>
<keyword id="KW-0677">Repeat</keyword>
<keyword id="KW-0853">WD repeat</keyword>
<feature type="chain" id="PRO_0000448268" description="WD repeat- and FYVE domain-containing protein 4">
    <location>
        <begin position="1"/>
        <end position="3183"/>
    </location>
</feature>
<feature type="domain" description="BEACH-type PH" evidence="3">
    <location>
        <begin position="2383"/>
        <end position="2508"/>
    </location>
</feature>
<feature type="domain" description="BEACH" evidence="2">
    <location>
        <begin position="2525"/>
        <end position="2819"/>
    </location>
</feature>
<feature type="repeat" description="WD 1" evidence="1">
    <location>
        <begin position="2930"/>
        <end position="2969"/>
    </location>
</feature>
<feature type="repeat" description="WD 2" evidence="1">
    <location>
        <begin position="2979"/>
        <end position="3018"/>
    </location>
</feature>
<feature type="repeat" description="WD 3" evidence="1">
    <location>
        <begin position="3021"/>
        <end position="3060"/>
    </location>
</feature>
<feature type="repeat" description="WD 4" evidence="1">
    <location>
        <begin position="3070"/>
        <end position="3108"/>
    </location>
</feature>
<feature type="repeat" description="WD 5" evidence="1">
    <location>
        <begin position="3150"/>
        <end position="3183"/>
    </location>
</feature>
<feature type="region of interest" description="Disordered" evidence="4">
    <location>
        <begin position="1"/>
        <end position="37"/>
    </location>
</feature>
<feature type="region of interest" description="Disordered" evidence="4">
    <location>
        <begin position="790"/>
        <end position="811"/>
    </location>
</feature>
<feature type="region of interest" description="Disordered" evidence="4">
    <location>
        <begin position="938"/>
        <end position="977"/>
    </location>
</feature>
<feature type="region of interest" description="Disordered" evidence="4">
    <location>
        <begin position="1828"/>
        <end position="1852"/>
    </location>
</feature>
<feature type="region of interest" description="Disordered" evidence="4">
    <location>
        <begin position="2812"/>
        <end position="2836"/>
    </location>
</feature>
<feature type="compositionally biased region" description="Basic and acidic residues" evidence="4">
    <location>
        <begin position="1"/>
        <end position="15"/>
    </location>
</feature>
<feature type="compositionally biased region" description="Low complexity" evidence="4">
    <location>
        <begin position="1832"/>
        <end position="1852"/>
    </location>
</feature>
<accession>E9Q2M9</accession>
<reference key="1">
    <citation type="journal article" date="2009" name="PLoS Biol.">
        <title>Lineage-specific biology revealed by a finished genome assembly of the mouse.</title>
        <authorList>
            <person name="Church D.M."/>
            <person name="Goodstadt L."/>
            <person name="Hillier L.W."/>
            <person name="Zody M.C."/>
            <person name="Goldstein S."/>
            <person name="She X."/>
            <person name="Bult C.J."/>
            <person name="Agarwala R."/>
            <person name="Cherry J.L."/>
            <person name="DiCuccio M."/>
            <person name="Hlavina W."/>
            <person name="Kapustin Y."/>
            <person name="Meric P."/>
            <person name="Maglott D."/>
            <person name="Birtle Z."/>
            <person name="Marques A.C."/>
            <person name="Graves T."/>
            <person name="Zhou S."/>
            <person name="Teague B."/>
            <person name="Potamousis K."/>
            <person name="Churas C."/>
            <person name="Place M."/>
            <person name="Herschleb J."/>
            <person name="Runnheim R."/>
            <person name="Forrest D."/>
            <person name="Amos-Landgraf J."/>
            <person name="Schwartz D.C."/>
            <person name="Cheng Z."/>
            <person name="Lindblad-Toh K."/>
            <person name="Eichler E.E."/>
            <person name="Ponting C.P."/>
        </authorList>
    </citation>
    <scope>NUCLEOTIDE SEQUENCE [LARGE SCALE GENOMIC DNA]</scope>
    <source>
        <strain>C57BL/6J</strain>
    </source>
</reference>
<reference evidence="8" key="2">
    <citation type="journal article" date="2010" name="Cell">
        <title>A tissue-specific atlas of mouse protein phosphorylation and expression.</title>
        <authorList>
            <person name="Huttlin E.L."/>
            <person name="Jedrychowski M.P."/>
            <person name="Elias J.E."/>
            <person name="Goswami T."/>
            <person name="Rad R."/>
            <person name="Beausoleil S.A."/>
            <person name="Villen J."/>
            <person name="Haas W."/>
            <person name="Sowa M.E."/>
            <person name="Gygi S.P."/>
        </authorList>
    </citation>
    <scope>IDENTIFICATION BY MASS SPECTROMETRY [LARGE SCALE ANALYSIS]</scope>
</reference>
<reference key="3">
    <citation type="journal article" date="2018" name="J. Immunol.">
        <title>WDFY4 is involved in symptoms of Systemic Lupus Erythematosus by modulating B cell fate via noncanonical autophagy.</title>
        <authorList>
            <person name="Yuan Q."/>
            <person name="Li Y."/>
            <person name="Li J."/>
            <person name="Bian X."/>
            <person name="Long F."/>
            <person name="Duan R."/>
            <person name="Ma X."/>
            <person name="Gao F."/>
            <person name="Gao S."/>
            <person name="Wei S."/>
            <person name="Li X."/>
            <person name="Sun W."/>
            <person name="Liu Q."/>
        </authorList>
    </citation>
    <scope>FUNCTION</scope>
    <scope>DISRUPTION PHENOTYPE</scope>
    <scope>TISSUE SPECIFICITY</scope>
</reference>
<reference key="4">
    <citation type="journal article" date="2018" name="Science">
        <title>WDFY4 is required for cross-presentation in response to viral and tumor antigens.</title>
        <authorList>
            <person name="Theisen D.J."/>
            <person name="Davidson J.T. IV"/>
            <person name="Briseno C.G."/>
            <person name="Gargaro M."/>
            <person name="Lauron E.J."/>
            <person name="Wang Q."/>
            <person name="Desai P."/>
            <person name="Durai V."/>
            <person name="Bagadia P."/>
            <person name="Brickner J.R."/>
            <person name="Beatty W.L."/>
            <person name="Virgin H.W."/>
            <person name="Gillanders W.E."/>
            <person name="Mosammaparast N."/>
            <person name="Diamond M.S."/>
            <person name="Sibley L.D."/>
            <person name="Yokoyama W."/>
            <person name="Schreiber R.D."/>
            <person name="Murphy T.L."/>
            <person name="Murphy K.M."/>
        </authorList>
    </citation>
    <scope>FUNCTION</scope>
    <scope>DISRUPTION PHENOTYPE</scope>
    <scope>INTERACTION WITH HSP90AB1</scope>
    <scope>SUBCELLULAR LOCATION</scope>
</reference>
<sequence>MEAEDLSKTEDRPEDPGFQNEGQSPAVKPSFSLEGQSPGPSVLWDMLEQKFLDYQQLMPRNPEERRKNLLSLLPLFLKAWEHSVGIICFRSLQRLAEDVSDQLAQEIQQALAGKPAEQARAAAGQLLQWKSDADQDGNLLLKSVYVLTGTDSETLGRVVDSGLPALLLQCLYLFFAFPVEKDDLLESDVQGQRMFVQMLLNICSESQGLEGLLSGSELQSLLIATTCLREHSCLFWKQPTFCVLRAISKAQSPSVIQYLRTADCVRLSVQNLSKLADTLPAPEVSEAVSLILNFVRDSYPISSALLLEFENGEGYPLLLKVLLRYNGLTQGVVEPHLEELIELVMWLTTCGRSELKVFDSVTYPQLEGFKFHQEASGVTVKNLQAFQVLQNLFHRASDSVLCIQVLLAIKTMWAWNPRNFFLLEWTLQPISQFAEIIPLKPTPVQEHFFQLLETLVFKLLYVPHEVLAKVQRLIKESSELSCTLVALRSILRITASDRLFTDIFRDSGLLGLLLAQLRKQAKIMRKSGNKECSPDVQDPERELTYVMLSTVVTLLQGSVRNAVVLKDHGMVPFIKIFLDDECYRGPSLSILEQLSVINAEEYMSIIVGALCSSTQGELQLKLDLLKSLLRILETPKGHAAFRVSSGFNGLLSLLSDLEGSLQVPEVTTCGAVSPSQTLELVLHTLCVVSAALHLDPVNEHFFRSNGLFEKLAEDLCLLGCFGTPEEERTRWDSSSDMKARPFMDLLSCAFSSSCQFPPRLQSCLQILSFLESMASGTLHLRGDLMEPARAGQEPSVDAQKAEAGGRQGKFKQWPDMEDRMDEGDVMIMHPGIICIMVRLLPRLYLEDHPQLSEEIQCSVARHLLSLVKSEKNRQVMCEAGMLRTLMTFCPRTLSTGGSDLHSILIRIFEKLGSQAIEPDVLRQFLGLGIRPPRSAAVKSLHLPPGHEDNPGCSGSCAATAEKPTDSSPRPGGSQALRPSWASQYSATALQTTLSLISMTSPRNLQPQRAALTPSFVEFDMSSEGYGCLFTPTLSTVMGTSTEHSISGGTGSGAPRPFPPPGGLTFSCWFLISRQANVMEGHPLRFLTLVRHLARTEQPFVCFSISLCMDDLSLVVSTEEKEFQPLDAMEPEDEAEPSAGRQLQVRCSQLLTCGQWYHLAVVVSKEMKRNCSVTTYLDGQAIGSAKMLYIQALPGSFFSMDPSSFVDVYGYIGTPRVWKQKSSLTWRLGPAYLFEEDISADTLALIIKLGPRYCGNFQAVHLQGEDPDGEATPLIAEERVSFGLYVPSSSITSIMNIRNTYNEVDSRLIAKEMNISSRDNATPVFLLRNCAGHLSGPLRTLGAVAVGQLGVRVFHSSPAASSLDYIGGPAILLGLISLATDDHTMYAAMKVLHSVLTSNAMCDYLMQHICGYQILAFLLRKKTSFLNHRIFQLILSVAGTAELGFRPSAVTNMCIFQHVLCNFELWTNTADNLELTLFSHLLEILQSPREGPRNAEVAHQAQLLPKLLFLFNEPSLALSKVSTIIAILGCQLKGHFNIQDLLRVGLFVIYTLKPSSVNERQICLDGAQDPSRPAGSQTSGKAIWLRNQLLEMLFGVISSSQLHLTSELKEQVFLSLGPDWFLLLLQGHLHPSTTTLALKLLLYFLSSPPLRGRFRDGLSAGCWVENCMDGVDIVMDNLKSRPAVPDQSPCLLPGFRVLNDFLAYHVLIPEVYLIVSSFFLQTPLTELTNGPRENLDLMLQWLLQKHHQQEVLQAGLCIEGALLLLGMLKAIMNQPPAGSGDGAWEQTLPSSVLQFLRLVHRSYPQDSAWRTPDFLQTVAIITFPLETQKETTSESSRNTSSPGASAEASHAAEGFQASFQPHPALRQLREFMQVLLRELLLGGSNPKQWLPLEVILEASPDGATSQQKRDFQTEVLLSTMDIFQVPSGDGMPTLRGSKEPLPNAEAGAVPSLASVSYFTQKLVEKIYSGVFSADPRHILLFITEHIIAVIENPSSQKDTVMSALYSSLNKVILHCLSKPQQSLSECLGLLTILDFLQEHWDIIFATYNSNVSFLLCLMHCLLLLNARSYPEGFGLEPKPRITPYHQVFLSPNEEVKDKKEEGLPSLGDVQHSIQKSVRALWQQLVAQRRQTLEDAFKIDLSVKAGEIEVKIEEITPLWEETMLRAWQHYLASEKKSLASRSSVMHHSKVTSWSGSLSSAMRLMPGRQAKDPECRAEDFVSCIENYRRKGQELYASIYKDYVQRRKSGSIKAATAWARMREQLFGELGLWGQMTESTRCSRWELDGREGPARMRKRIRHLLAWEPLNLGYKESQEGKGDVSQTNTGNQVFMTADELTTEEAESRPDEVGVDCTQLTFFPALHESLHSEDFLELCRERQVILQELLDGEKVSQKVPMVIVQGHLVSEGILLFGQHHFYICENFTLSPTGDVYCTHHCLSNISDPFIFNMCSKDRSSDHYSCQRHAYSDLRELRQARFLLQDIALEIFFQNGYSKLLVFYNSDRSKALKSFSTFQPSLKGKGTTEDPFNLRKHPGFDRTMLQRWQKREISNFEYLMYLNTLAGRTYNDYMQYPVFPWVLADYTSEMLNLTNPKTFRDLSKPMGAQTKERKLKFTQRFKDVEKIEGDMTVQCHYYTHYSSAIIVASYLVRMPPFTQAFCSLQGGSFDVADRMFHSVKSTWESASKENMSDVRELTPEFFYLPEFLTNCNAVEFGCMQDGTTLGDVQLPPWADGDPRKFISLHRQALESDFVSSNLHHWIDLIFGYKQQGPAAVEAVNTFHPYFYGDRIDLGSITDPLIKSTILGFISNFGQVPKQIFTKPHPSRNTTGKNPGPGKDASTPVGLPGHSQSFLHSLPALRPSQVTVKDMYLFSLGSESPKGAIGHIVPTEKSILAVEKNKLLMPPLWNRTFSWGFDDFSCCLGSYGSDKILMTFENLAAWGPCLCAVCPSPTMIVTSGASAVVCIWELSLVKGRPRGLKLRQALYGHTQAVTCLTASVTFSLLVSGSQDRTCILWDLDHLSRVACLPVHREGISAIAISDVSGTIVSCAGAHLSLWNVNGQPLASITTAWGPEGTITCCCIVEGPAWDASHVIITGSKDGMVRIWKTEDVKMPVPRQAVMEEPSTEPLSPRGHKWAKNLALSRELDVSVALSGKPSKASPAVTALAITRNQSKLLVGDEKGRIFCWSADG</sequence>